<dbReference type="EMBL" id="AF326317">
    <property type="protein sequence ID" value="AAK01423.1"/>
    <property type="molecule type" value="mRNA"/>
</dbReference>
<dbReference type="EMBL" id="AF326318">
    <property type="protein sequence ID" value="AAK01424.1"/>
    <property type="molecule type" value="mRNA"/>
</dbReference>
<dbReference type="PIR" id="S06337">
    <property type="entry name" value="S06337"/>
</dbReference>
<dbReference type="RefSeq" id="NP_001117762.1">
    <property type="nucleotide sequence ID" value="NM_001124290.1"/>
</dbReference>
<dbReference type="SMR" id="P43648"/>
<dbReference type="GlyCosmos" id="P43648">
    <property type="glycosylation" value="1 site, No reported glycans"/>
</dbReference>
<dbReference type="Ensembl" id="ENSOMYT00000000409.2">
    <property type="protein sequence ID" value="ENSOMYP00000000323.2"/>
    <property type="gene ID" value="ENSOMYG00000000255.2"/>
</dbReference>
<dbReference type="GeneID" id="100135946"/>
<dbReference type="KEGG" id="omy:100135946"/>
<dbReference type="GeneTree" id="ENSGT00390000005989"/>
<dbReference type="OrthoDB" id="10025265at2759"/>
<dbReference type="Proteomes" id="UP000694395">
    <property type="component" value="Chromosome 5"/>
</dbReference>
<dbReference type="GO" id="GO:0005615">
    <property type="term" value="C:extracellular space"/>
    <property type="evidence" value="ECO:0000314"/>
    <property type="project" value="AgBase"/>
</dbReference>
<dbReference type="GO" id="GO:0005771">
    <property type="term" value="C:multivesicular body"/>
    <property type="evidence" value="ECO:0000314"/>
    <property type="project" value="AgBase"/>
</dbReference>
<dbReference type="GO" id="GO:0005634">
    <property type="term" value="C:nucleus"/>
    <property type="evidence" value="ECO:0000314"/>
    <property type="project" value="AgBase"/>
</dbReference>
<dbReference type="GO" id="GO:0060418">
    <property type="term" value="C:yolk plasma"/>
    <property type="evidence" value="ECO:0000314"/>
    <property type="project" value="AgBase"/>
</dbReference>
<dbReference type="GO" id="GO:0005179">
    <property type="term" value="F:hormone activity"/>
    <property type="evidence" value="ECO:0007669"/>
    <property type="project" value="UniProtKB-KW"/>
</dbReference>
<dbReference type="GO" id="GO:0055074">
    <property type="term" value="P:calcium ion homeostasis"/>
    <property type="evidence" value="ECO:0000303"/>
    <property type="project" value="AgBase"/>
</dbReference>
<dbReference type="GO" id="GO:0006816">
    <property type="term" value="P:calcium ion transport"/>
    <property type="evidence" value="ECO:0007669"/>
    <property type="project" value="UniProtKB-KW"/>
</dbReference>
<dbReference type="GO" id="GO:0006874">
    <property type="term" value="P:intracellular calcium ion homeostasis"/>
    <property type="evidence" value="ECO:0007669"/>
    <property type="project" value="TreeGrafter"/>
</dbReference>
<dbReference type="GO" id="GO:0051592">
    <property type="term" value="P:response to calcium ion"/>
    <property type="evidence" value="ECO:0000314"/>
    <property type="project" value="AgBase"/>
</dbReference>
<dbReference type="GO" id="GO:0043434">
    <property type="term" value="P:response to peptide hormone"/>
    <property type="evidence" value="ECO:0000314"/>
    <property type="project" value="AgBase"/>
</dbReference>
<dbReference type="InterPro" id="IPR004978">
    <property type="entry name" value="Stanniocalcin"/>
</dbReference>
<dbReference type="PANTHER" id="PTHR11245">
    <property type="entry name" value="STANNIOCALCIN"/>
    <property type="match status" value="1"/>
</dbReference>
<dbReference type="PANTHER" id="PTHR11245:SF7">
    <property type="entry name" value="STANNIOCALCIN"/>
    <property type="match status" value="1"/>
</dbReference>
<dbReference type="Pfam" id="PF03298">
    <property type="entry name" value="Stanniocalcin"/>
    <property type="match status" value="1"/>
</dbReference>
<accession>P43648</accession>
<accession>Q98SE1</accession>
<gene>
    <name type="primary">stc</name>
</gene>
<evidence type="ECO:0000255" key="1"/>
<evidence type="ECO:0000256" key="2">
    <source>
        <dbReference type="SAM" id="MobiDB-lite"/>
    </source>
</evidence>
<evidence type="ECO:0000269" key="3">
    <source>
    </source>
</evidence>
<evidence type="ECO:0000305" key="4"/>
<reference key="1">
    <citation type="submission" date="2000-12" db="EMBL/GenBank/DDBJ databases">
        <title>Rainbow trout ovarian stanniocalcin.</title>
        <authorList>
            <person name="McCudden C.R."/>
            <person name="Wagner G.F."/>
        </authorList>
    </citation>
    <scope>NUCLEOTIDE SEQUENCE [MRNA]</scope>
    <source>
        <tissue>Ovary</tissue>
    </source>
</reference>
<reference key="2">
    <citation type="journal article" date="1988" name="Gen. Comp. Endocrinol.">
        <title>Identification of hypocalcin (teleocalcin) isolated from trout Stannius corpuscles.</title>
        <authorList>
            <person name="Lafeber F.P.J.G."/>
            <person name="Hanssen R.G.J.M."/>
            <person name="Choy Y.M."/>
            <person name="Flik G."/>
            <person name="Herrmann-Erlee M.P.M."/>
            <person name="Pang P.K.T."/>
            <person name="Wendelaar Bonga S.E."/>
        </authorList>
    </citation>
    <scope>PROTEIN SEQUENCE OF 34-66</scope>
    <source>
        <tissue>Stannius corpuscle</tissue>
    </source>
</reference>
<keyword id="KW-0106">Calcium</keyword>
<keyword id="KW-0109">Calcium transport</keyword>
<keyword id="KW-0903">Direct protein sequencing</keyword>
<keyword id="KW-1015">Disulfide bond</keyword>
<keyword id="KW-0325">Glycoprotein</keyword>
<keyword id="KW-0372">Hormone</keyword>
<keyword id="KW-0406">Ion transport</keyword>
<keyword id="KW-0964">Secreted</keyword>
<keyword id="KW-0732">Signal</keyword>
<keyword id="KW-0813">Transport</keyword>
<proteinExistence type="evidence at protein level"/>
<comment type="function">
    <text>Its primary function is the prevention of hypercalcemia. Upon release into the circulation, it lowers calcium transport by the gills, thereby reducing its rate of influx from the environment into the extracellular compartment. STC also stimulates phosphate reabsorption by renal proximal tubules. The consequence of this action is increased levels of plasma phosphate, which combines with excess calcium and promotes its disposal into bone and scales.</text>
</comment>
<comment type="subunit">
    <text>Homodimer; disulfide-linked.</text>
</comment>
<comment type="subcellular location">
    <subcellularLocation>
        <location>Secreted</location>
    </subcellularLocation>
</comment>
<comment type="tissue specificity">
    <text>Produced and secreted by the corpuscles of Stannius.</text>
</comment>
<comment type="similarity">
    <text evidence="4">Belongs to the stanniocalcin family.</text>
</comment>
<name>STC_ONCMY</name>
<protein>
    <recommendedName>
        <fullName>Stanniocalcin</fullName>
        <shortName>STC</shortName>
    </recommendedName>
    <alternativeName>
        <fullName>Corpuscles of Stannius protein</fullName>
        <shortName>CS</shortName>
    </alternativeName>
    <alternativeName>
        <fullName>Hypocalcin</fullName>
    </alternativeName>
    <alternativeName>
        <fullName>Teleocalcin</fullName>
    </alternativeName>
</protein>
<organism>
    <name type="scientific">Oncorhynchus mykiss</name>
    <name type="common">Rainbow trout</name>
    <name type="synonym">Salmo gairdneri</name>
    <dbReference type="NCBI Taxonomy" id="8022"/>
    <lineage>
        <taxon>Eukaryota</taxon>
        <taxon>Metazoa</taxon>
        <taxon>Chordata</taxon>
        <taxon>Craniata</taxon>
        <taxon>Vertebrata</taxon>
        <taxon>Euteleostomi</taxon>
        <taxon>Actinopterygii</taxon>
        <taxon>Neopterygii</taxon>
        <taxon>Teleostei</taxon>
        <taxon>Protacanthopterygii</taxon>
        <taxon>Salmoniformes</taxon>
        <taxon>Salmonidae</taxon>
        <taxon>Salmoninae</taxon>
        <taxon>Oncorhynchus</taxon>
    </lineage>
</organism>
<sequence>MLAKFGLCAVFLVLGTAATFDTDPEEASPRRARFSSNSPSDVARCLNGALAVGCGTFACLENSTCDTDGMHDICQLFFHTAATFNTQGKTFVKESLRCIANGVTSKVFQTIRRCGVFQRMISEVQEECYSRLDICGVARSNPEAIGEVVQVPAHFPNRYYSTLLQSLLACDEETVAVVRAGLVARLGPDMETLFQLLQNKHCPQGSNQGPNSAPAGWRWPMGSPPSFKIQPSMRGRDPTHLFARKRSVEALEREME</sequence>
<feature type="signal peptide" evidence="1">
    <location>
        <begin position="1"/>
        <end position="18"/>
    </location>
</feature>
<feature type="propeptide" id="PRO_0000033312" evidence="3">
    <location>
        <begin position="19"/>
        <end position="33"/>
    </location>
</feature>
<feature type="chain" id="PRO_0000033313" description="Stanniocalcin">
    <location>
        <begin position="34"/>
        <end position="256"/>
    </location>
</feature>
<feature type="region of interest" description="Disordered" evidence="2">
    <location>
        <begin position="204"/>
        <end position="241"/>
    </location>
</feature>
<feature type="glycosylation site" description="N-linked (GlcNAc...) asparagine">
    <location>
        <position position="62"/>
    </location>
</feature>
<feature type="sequence variant">
    <original>D</original>
    <variation>E</variation>
    <location>
        <position position="41"/>
    </location>
</feature>